<reference key="1">
    <citation type="journal article" date="1994" name="J. Immunol.">
        <title>Cloning of two adenosine receptor subtypes from mouse bone marrow-derived mast cells.</title>
        <authorList>
            <person name="Marquardt D.L."/>
            <person name="Walker L.L."/>
            <person name="Heinemann S."/>
        </authorList>
    </citation>
    <scope>NUCLEOTIDE SEQUENCE [MRNA]</scope>
    <source>
        <strain>BALB/cJ</strain>
        <tissue>Brain</tissue>
    </source>
</reference>
<reference key="2">
    <citation type="journal article" date="2005" name="Science">
        <title>The transcriptional landscape of the mammalian genome.</title>
        <authorList>
            <person name="Carninci P."/>
            <person name="Kasukawa T."/>
            <person name="Katayama S."/>
            <person name="Gough J."/>
            <person name="Frith M.C."/>
            <person name="Maeda N."/>
            <person name="Oyama R."/>
            <person name="Ravasi T."/>
            <person name="Lenhard B."/>
            <person name="Wells C."/>
            <person name="Kodzius R."/>
            <person name="Shimokawa K."/>
            <person name="Bajic V.B."/>
            <person name="Brenner S.E."/>
            <person name="Batalov S."/>
            <person name="Forrest A.R."/>
            <person name="Zavolan M."/>
            <person name="Davis M.J."/>
            <person name="Wilming L.G."/>
            <person name="Aidinis V."/>
            <person name="Allen J.E."/>
            <person name="Ambesi-Impiombato A."/>
            <person name="Apweiler R."/>
            <person name="Aturaliya R.N."/>
            <person name="Bailey T.L."/>
            <person name="Bansal M."/>
            <person name="Baxter L."/>
            <person name="Beisel K.W."/>
            <person name="Bersano T."/>
            <person name="Bono H."/>
            <person name="Chalk A.M."/>
            <person name="Chiu K.P."/>
            <person name="Choudhary V."/>
            <person name="Christoffels A."/>
            <person name="Clutterbuck D.R."/>
            <person name="Crowe M.L."/>
            <person name="Dalla E."/>
            <person name="Dalrymple B.P."/>
            <person name="de Bono B."/>
            <person name="Della Gatta G."/>
            <person name="di Bernardo D."/>
            <person name="Down T."/>
            <person name="Engstrom P."/>
            <person name="Fagiolini M."/>
            <person name="Faulkner G."/>
            <person name="Fletcher C.F."/>
            <person name="Fukushima T."/>
            <person name="Furuno M."/>
            <person name="Futaki S."/>
            <person name="Gariboldi M."/>
            <person name="Georgii-Hemming P."/>
            <person name="Gingeras T.R."/>
            <person name="Gojobori T."/>
            <person name="Green R.E."/>
            <person name="Gustincich S."/>
            <person name="Harbers M."/>
            <person name="Hayashi Y."/>
            <person name="Hensch T.K."/>
            <person name="Hirokawa N."/>
            <person name="Hill D."/>
            <person name="Huminiecki L."/>
            <person name="Iacono M."/>
            <person name="Ikeo K."/>
            <person name="Iwama A."/>
            <person name="Ishikawa T."/>
            <person name="Jakt M."/>
            <person name="Kanapin A."/>
            <person name="Katoh M."/>
            <person name="Kawasawa Y."/>
            <person name="Kelso J."/>
            <person name="Kitamura H."/>
            <person name="Kitano H."/>
            <person name="Kollias G."/>
            <person name="Krishnan S.P."/>
            <person name="Kruger A."/>
            <person name="Kummerfeld S.K."/>
            <person name="Kurochkin I.V."/>
            <person name="Lareau L.F."/>
            <person name="Lazarevic D."/>
            <person name="Lipovich L."/>
            <person name="Liu J."/>
            <person name="Liuni S."/>
            <person name="McWilliam S."/>
            <person name="Madan Babu M."/>
            <person name="Madera M."/>
            <person name="Marchionni L."/>
            <person name="Matsuda H."/>
            <person name="Matsuzawa S."/>
            <person name="Miki H."/>
            <person name="Mignone F."/>
            <person name="Miyake S."/>
            <person name="Morris K."/>
            <person name="Mottagui-Tabar S."/>
            <person name="Mulder N."/>
            <person name="Nakano N."/>
            <person name="Nakauchi H."/>
            <person name="Ng P."/>
            <person name="Nilsson R."/>
            <person name="Nishiguchi S."/>
            <person name="Nishikawa S."/>
            <person name="Nori F."/>
            <person name="Ohara O."/>
            <person name="Okazaki Y."/>
            <person name="Orlando V."/>
            <person name="Pang K.C."/>
            <person name="Pavan W.J."/>
            <person name="Pavesi G."/>
            <person name="Pesole G."/>
            <person name="Petrovsky N."/>
            <person name="Piazza S."/>
            <person name="Reed J."/>
            <person name="Reid J.F."/>
            <person name="Ring B.Z."/>
            <person name="Ringwald M."/>
            <person name="Rost B."/>
            <person name="Ruan Y."/>
            <person name="Salzberg S.L."/>
            <person name="Sandelin A."/>
            <person name="Schneider C."/>
            <person name="Schoenbach C."/>
            <person name="Sekiguchi K."/>
            <person name="Semple C.A."/>
            <person name="Seno S."/>
            <person name="Sessa L."/>
            <person name="Sheng Y."/>
            <person name="Shibata Y."/>
            <person name="Shimada H."/>
            <person name="Shimada K."/>
            <person name="Silva D."/>
            <person name="Sinclair B."/>
            <person name="Sperling S."/>
            <person name="Stupka E."/>
            <person name="Sugiura K."/>
            <person name="Sultana R."/>
            <person name="Takenaka Y."/>
            <person name="Taki K."/>
            <person name="Tammoja K."/>
            <person name="Tan S.L."/>
            <person name="Tang S."/>
            <person name="Taylor M.S."/>
            <person name="Tegner J."/>
            <person name="Teichmann S.A."/>
            <person name="Ueda H.R."/>
            <person name="van Nimwegen E."/>
            <person name="Verardo R."/>
            <person name="Wei C.L."/>
            <person name="Yagi K."/>
            <person name="Yamanishi H."/>
            <person name="Zabarovsky E."/>
            <person name="Zhu S."/>
            <person name="Zimmer A."/>
            <person name="Hide W."/>
            <person name="Bult C."/>
            <person name="Grimmond S.M."/>
            <person name="Teasdale R.D."/>
            <person name="Liu E.T."/>
            <person name="Brusic V."/>
            <person name="Quackenbush J."/>
            <person name="Wahlestedt C."/>
            <person name="Mattick J.S."/>
            <person name="Hume D.A."/>
            <person name="Kai C."/>
            <person name="Sasaki D."/>
            <person name="Tomaru Y."/>
            <person name="Fukuda S."/>
            <person name="Kanamori-Katayama M."/>
            <person name="Suzuki M."/>
            <person name="Aoki J."/>
            <person name="Arakawa T."/>
            <person name="Iida J."/>
            <person name="Imamura K."/>
            <person name="Itoh M."/>
            <person name="Kato T."/>
            <person name="Kawaji H."/>
            <person name="Kawagashira N."/>
            <person name="Kawashima T."/>
            <person name="Kojima M."/>
            <person name="Kondo S."/>
            <person name="Konno H."/>
            <person name="Nakano K."/>
            <person name="Ninomiya N."/>
            <person name="Nishio T."/>
            <person name="Okada M."/>
            <person name="Plessy C."/>
            <person name="Shibata K."/>
            <person name="Shiraki T."/>
            <person name="Suzuki S."/>
            <person name="Tagami M."/>
            <person name="Waki K."/>
            <person name="Watahiki A."/>
            <person name="Okamura-Oho Y."/>
            <person name="Suzuki H."/>
            <person name="Kawai J."/>
            <person name="Hayashizaki Y."/>
        </authorList>
    </citation>
    <scope>NUCLEOTIDE SEQUENCE [LARGE SCALE MRNA]</scope>
    <source>
        <strain>C57BL/6J</strain>
        <tissue>Brain cortex</tissue>
        <tissue>Corpora quadrigemina</tissue>
        <tissue>Medulla oblongata</tissue>
    </source>
</reference>
<reference key="3">
    <citation type="submission" date="2005-09" db="EMBL/GenBank/DDBJ databases">
        <authorList>
            <person name="Mural R.J."/>
            <person name="Adams M.D."/>
            <person name="Myers E.W."/>
            <person name="Smith H.O."/>
            <person name="Venter J.C."/>
        </authorList>
    </citation>
    <scope>NUCLEOTIDE SEQUENCE [LARGE SCALE GENOMIC DNA]</scope>
</reference>
<reference key="4">
    <citation type="journal article" date="1999" name="J. Biol. Chem.">
        <title>Characterization of the murine A1 adenosine receptor promoter, potent regulation by GATA-4 and Nkx2.5.</title>
        <authorList>
            <person name="Rivkees S.A."/>
            <person name="Chen M."/>
            <person name="Kulkarni J."/>
            <person name="Browne J."/>
            <person name="Zhao Z."/>
        </authorList>
    </citation>
    <scope>NUCLEOTIDE SEQUENCE [GENOMIC DNA] OF 1-107</scope>
</reference>
<accession>Q60612</accession>
<accession>Q8BGU7</accession>
<accession>Q9WUF9</accession>
<proteinExistence type="evidence at transcript level"/>
<keyword id="KW-1003">Cell membrane</keyword>
<keyword id="KW-1015">Disulfide bond</keyword>
<keyword id="KW-0297">G-protein coupled receptor</keyword>
<keyword id="KW-0325">Glycoprotein</keyword>
<keyword id="KW-0449">Lipoprotein</keyword>
<keyword id="KW-0472">Membrane</keyword>
<keyword id="KW-0564">Palmitate</keyword>
<keyword id="KW-0675">Receptor</keyword>
<keyword id="KW-1185">Reference proteome</keyword>
<keyword id="KW-0807">Transducer</keyword>
<keyword id="KW-0812">Transmembrane</keyword>
<keyword id="KW-1133">Transmembrane helix</keyword>
<protein>
    <recommendedName>
        <fullName>Adenosine receptor A1</fullName>
    </recommendedName>
</protein>
<feature type="chain" id="PRO_0000068992" description="Adenosine receptor A1">
    <location>
        <begin position="1"/>
        <end position="326"/>
    </location>
</feature>
<feature type="topological domain" description="Extracellular" evidence="1">
    <location>
        <begin position="1"/>
        <end position="10"/>
    </location>
</feature>
<feature type="transmembrane region" description="Helical; Name=1" evidence="1">
    <location>
        <begin position="11"/>
        <end position="33"/>
    </location>
</feature>
<feature type="topological domain" description="Cytoplasmic" evidence="1">
    <location>
        <begin position="34"/>
        <end position="46"/>
    </location>
</feature>
<feature type="transmembrane region" description="Helical; Name=2" evidence="1">
    <location>
        <begin position="47"/>
        <end position="69"/>
    </location>
</feature>
<feature type="topological domain" description="Extracellular" evidence="1">
    <location>
        <begin position="70"/>
        <end position="80"/>
    </location>
</feature>
<feature type="transmembrane region" description="Helical; Name=3" evidence="1">
    <location>
        <begin position="81"/>
        <end position="102"/>
    </location>
</feature>
<feature type="topological domain" description="Cytoplasmic" evidence="1">
    <location>
        <begin position="103"/>
        <end position="123"/>
    </location>
</feature>
<feature type="transmembrane region" description="Helical; Name=4" evidence="1">
    <location>
        <begin position="124"/>
        <end position="146"/>
    </location>
</feature>
<feature type="topological domain" description="Extracellular" evidence="1">
    <location>
        <begin position="147"/>
        <end position="176"/>
    </location>
</feature>
<feature type="transmembrane region" description="Helical; Name=5" evidence="1">
    <location>
        <begin position="177"/>
        <end position="201"/>
    </location>
</feature>
<feature type="topological domain" description="Cytoplasmic" evidence="1">
    <location>
        <begin position="202"/>
        <end position="235"/>
    </location>
</feature>
<feature type="transmembrane region" description="Helical; Name=6" evidence="1">
    <location>
        <begin position="236"/>
        <end position="259"/>
    </location>
</feature>
<feature type="topological domain" description="Extracellular" evidence="1">
    <location>
        <begin position="260"/>
        <end position="267"/>
    </location>
</feature>
<feature type="transmembrane region" description="Helical; Name=7" evidence="1">
    <location>
        <begin position="268"/>
        <end position="292"/>
    </location>
</feature>
<feature type="topological domain" description="Cytoplasmic" evidence="1">
    <location>
        <begin position="293"/>
        <end position="326"/>
    </location>
</feature>
<feature type="lipid moiety-binding region" description="S-palmitoyl cysteine" evidence="1">
    <location>
        <position position="309"/>
    </location>
</feature>
<feature type="glycosylation site" description="N-linked (GlcNAc...) asparagine" evidence="1">
    <location>
        <position position="148"/>
    </location>
</feature>
<feature type="glycosylation site" description="N-linked (GlcNAc...) asparagine" evidence="1">
    <location>
        <position position="159"/>
    </location>
</feature>
<feature type="disulfide bond" evidence="2">
    <location>
        <begin position="80"/>
        <end position="169"/>
    </location>
</feature>
<feature type="sequence conflict" description="In Ref. 1." evidence="3" ref="1">
    <original>A</original>
    <variation>G</variation>
    <location>
        <position position="10"/>
    </location>
</feature>
<feature type="sequence conflict" description="In Ref. 4; AAD31843." evidence="3" ref="4">
    <original>L</original>
    <variation>P</variation>
    <location>
        <position position="107"/>
    </location>
</feature>
<feature type="sequence conflict" description="In Ref. 1; AAA18999." evidence="3" ref="1">
    <original>D</original>
    <variation>E</variation>
    <location>
        <position position="325"/>
    </location>
</feature>
<gene>
    <name type="primary">Adora1</name>
</gene>
<dbReference type="EMBL" id="U05671">
    <property type="protein sequence ID" value="AAA18999.1"/>
    <property type="status" value="ALT_INIT"/>
    <property type="molecule type" value="mRNA"/>
</dbReference>
<dbReference type="EMBL" id="AK043954">
    <property type="protein sequence ID" value="BAC31713.1"/>
    <property type="molecule type" value="mRNA"/>
</dbReference>
<dbReference type="EMBL" id="AK045729">
    <property type="protein sequence ID" value="BAC32474.1"/>
    <property type="molecule type" value="mRNA"/>
</dbReference>
<dbReference type="EMBL" id="AK134553">
    <property type="protein sequence ID" value="BAE22183.1"/>
    <property type="molecule type" value="mRNA"/>
</dbReference>
<dbReference type="EMBL" id="CH466520">
    <property type="protein sequence ID" value="EDL39623.1"/>
    <property type="molecule type" value="Genomic_DNA"/>
</dbReference>
<dbReference type="EMBL" id="AF133099">
    <property type="protein sequence ID" value="AAD31843.1"/>
    <property type="molecule type" value="Genomic_DNA"/>
</dbReference>
<dbReference type="CCDS" id="CCDS15305.1"/>
<dbReference type="RefSeq" id="NP_001008533.1">
    <property type="nucleotide sequence ID" value="NM_001008533.3"/>
</dbReference>
<dbReference type="RefSeq" id="NP_001034599.1">
    <property type="nucleotide sequence ID" value="NM_001039510.2"/>
</dbReference>
<dbReference type="RefSeq" id="NP_001269874.1">
    <property type="nucleotide sequence ID" value="NM_001282945.1"/>
</dbReference>
<dbReference type="RefSeq" id="NP_001278857.1">
    <property type="nucleotide sequence ID" value="NM_001291928.1"/>
</dbReference>
<dbReference type="RefSeq" id="XP_006529142.1">
    <property type="nucleotide sequence ID" value="XM_006529079.4"/>
</dbReference>
<dbReference type="SMR" id="Q60612"/>
<dbReference type="FunCoup" id="Q60612">
    <property type="interactions" value="897"/>
</dbReference>
<dbReference type="STRING" id="10090.ENSMUSP00000083656"/>
<dbReference type="BindingDB" id="Q60612"/>
<dbReference type="ChEMBL" id="CHEMBL3688"/>
<dbReference type="DrugCentral" id="Q60612"/>
<dbReference type="GuidetoPHARMACOLOGY" id="18"/>
<dbReference type="GlyCosmos" id="Q60612">
    <property type="glycosylation" value="2 sites, No reported glycans"/>
</dbReference>
<dbReference type="GlyGen" id="Q60612">
    <property type="glycosylation" value="2 sites"/>
</dbReference>
<dbReference type="iPTMnet" id="Q60612"/>
<dbReference type="PhosphoSitePlus" id="Q60612"/>
<dbReference type="SwissPalm" id="Q60612"/>
<dbReference type="PaxDb" id="10090-ENSMUSP00000083656"/>
<dbReference type="ProteomicsDB" id="286036"/>
<dbReference type="Antibodypedia" id="20660">
    <property type="antibodies" value="490 antibodies from 37 providers"/>
</dbReference>
<dbReference type="DNASU" id="11539"/>
<dbReference type="Ensembl" id="ENSMUST00000038191.8">
    <property type="protein sequence ID" value="ENSMUSP00000043522.7"/>
    <property type="gene ID" value="ENSMUSG00000042429.10"/>
</dbReference>
<dbReference type="Ensembl" id="ENSMUST00000086465.6">
    <property type="protein sequence ID" value="ENSMUSP00000083656.5"/>
    <property type="gene ID" value="ENSMUSG00000042429.10"/>
</dbReference>
<dbReference type="GeneID" id="11539"/>
<dbReference type="KEGG" id="mmu:11539"/>
<dbReference type="UCSC" id="uc007crj.2">
    <property type="organism name" value="mouse"/>
</dbReference>
<dbReference type="AGR" id="MGI:99401"/>
<dbReference type="CTD" id="134"/>
<dbReference type="MGI" id="MGI:99401">
    <property type="gene designation" value="Adora1"/>
</dbReference>
<dbReference type="VEuPathDB" id="HostDB:ENSMUSG00000042429"/>
<dbReference type="eggNOG" id="KOG3656">
    <property type="taxonomic scope" value="Eukaryota"/>
</dbReference>
<dbReference type="GeneTree" id="ENSGT01030000234555"/>
<dbReference type="HOGENOM" id="CLU_009579_11_5_1"/>
<dbReference type="InParanoid" id="Q60612"/>
<dbReference type="OMA" id="FCCKDTP"/>
<dbReference type="OrthoDB" id="5984709at2759"/>
<dbReference type="PhylomeDB" id="Q60612"/>
<dbReference type="TreeFam" id="TF325296"/>
<dbReference type="Reactome" id="R-MMU-417973">
    <property type="pathway name" value="Adenosine P1 receptors"/>
</dbReference>
<dbReference type="Reactome" id="R-MMU-418594">
    <property type="pathway name" value="G alpha (i) signalling events"/>
</dbReference>
<dbReference type="BioGRID-ORCS" id="11539">
    <property type="hits" value="4 hits in 80 CRISPR screens"/>
</dbReference>
<dbReference type="ChiTaRS" id="Adora1">
    <property type="organism name" value="mouse"/>
</dbReference>
<dbReference type="PRO" id="PR:Q60612"/>
<dbReference type="Proteomes" id="UP000000589">
    <property type="component" value="Chromosome 1"/>
</dbReference>
<dbReference type="RNAct" id="Q60612">
    <property type="molecule type" value="protein"/>
</dbReference>
<dbReference type="Bgee" id="ENSMUSG00000042429">
    <property type="expression patterns" value="Expressed in pontine nuclear group and 198 other cell types or tissues"/>
</dbReference>
<dbReference type="ExpressionAtlas" id="Q60612">
    <property type="expression patterns" value="baseline and differential"/>
</dbReference>
<dbReference type="GO" id="GO:0032279">
    <property type="term" value="C:asymmetric synapse"/>
    <property type="evidence" value="ECO:0007669"/>
    <property type="project" value="Ensembl"/>
</dbReference>
<dbReference type="GO" id="GO:0030673">
    <property type="term" value="C:axolemma"/>
    <property type="evidence" value="ECO:0007669"/>
    <property type="project" value="Ensembl"/>
</dbReference>
<dbReference type="GO" id="GO:0016323">
    <property type="term" value="C:basolateral plasma membrane"/>
    <property type="evidence" value="ECO:0007669"/>
    <property type="project" value="Ensembl"/>
</dbReference>
<dbReference type="GO" id="GO:0044305">
    <property type="term" value="C:calyx of Held"/>
    <property type="evidence" value="ECO:0007669"/>
    <property type="project" value="Ensembl"/>
</dbReference>
<dbReference type="GO" id="GO:0005929">
    <property type="term" value="C:cilium"/>
    <property type="evidence" value="ECO:0007669"/>
    <property type="project" value="Ensembl"/>
</dbReference>
<dbReference type="GO" id="GO:0043197">
    <property type="term" value="C:dendritic spine"/>
    <property type="evidence" value="ECO:0000314"/>
    <property type="project" value="MGI"/>
</dbReference>
<dbReference type="GO" id="GO:0043025">
    <property type="term" value="C:neuronal cell body"/>
    <property type="evidence" value="ECO:0007669"/>
    <property type="project" value="Ensembl"/>
</dbReference>
<dbReference type="GO" id="GO:0005886">
    <property type="term" value="C:plasma membrane"/>
    <property type="evidence" value="ECO:0000266"/>
    <property type="project" value="MGI"/>
</dbReference>
<dbReference type="GO" id="GO:0045211">
    <property type="term" value="C:postsynaptic membrane"/>
    <property type="evidence" value="ECO:0007669"/>
    <property type="project" value="Ensembl"/>
</dbReference>
<dbReference type="GO" id="GO:0048786">
    <property type="term" value="C:presynaptic active zone"/>
    <property type="evidence" value="ECO:0007669"/>
    <property type="project" value="Ensembl"/>
</dbReference>
<dbReference type="GO" id="GO:0042734">
    <property type="term" value="C:presynaptic membrane"/>
    <property type="evidence" value="ECO:0007669"/>
    <property type="project" value="Ensembl"/>
</dbReference>
<dbReference type="GO" id="GO:0045202">
    <property type="term" value="C:synapse"/>
    <property type="evidence" value="ECO:0000314"/>
    <property type="project" value="MGI"/>
</dbReference>
<dbReference type="GO" id="GO:0043195">
    <property type="term" value="C:terminal bouton"/>
    <property type="evidence" value="ECO:0007669"/>
    <property type="project" value="Ensembl"/>
</dbReference>
<dbReference type="GO" id="GO:0001609">
    <property type="term" value="F:G protein-coupled adenosine receptor activity"/>
    <property type="evidence" value="ECO:0007669"/>
    <property type="project" value="Ensembl"/>
</dbReference>
<dbReference type="GO" id="GO:0001664">
    <property type="term" value="F:G protein-coupled receptor binding"/>
    <property type="evidence" value="ECO:0007669"/>
    <property type="project" value="Ensembl"/>
</dbReference>
<dbReference type="GO" id="GO:0031683">
    <property type="term" value="F:G-protein beta/gamma-subunit complex binding"/>
    <property type="evidence" value="ECO:0007669"/>
    <property type="project" value="Ensembl"/>
</dbReference>
<dbReference type="GO" id="GO:0031072">
    <property type="term" value="F:heat shock protein binding"/>
    <property type="evidence" value="ECO:0007669"/>
    <property type="project" value="Ensembl"/>
</dbReference>
<dbReference type="GO" id="GO:0032795">
    <property type="term" value="F:heterotrimeric G-protein binding"/>
    <property type="evidence" value="ECO:0007669"/>
    <property type="project" value="Ensembl"/>
</dbReference>
<dbReference type="GO" id="GO:0046982">
    <property type="term" value="F:protein heterodimerization activity"/>
    <property type="evidence" value="ECO:0007669"/>
    <property type="project" value="Ensembl"/>
</dbReference>
<dbReference type="GO" id="GO:0001883">
    <property type="term" value="F:purine nucleoside binding"/>
    <property type="evidence" value="ECO:0007669"/>
    <property type="project" value="Ensembl"/>
</dbReference>
<dbReference type="GO" id="GO:0007193">
    <property type="term" value="P:adenylate cyclase-inhibiting G protein-coupled receptor signaling pathway"/>
    <property type="evidence" value="ECO:0007669"/>
    <property type="project" value="Ensembl"/>
</dbReference>
<dbReference type="GO" id="GO:0050890">
    <property type="term" value="P:cognition"/>
    <property type="evidence" value="ECO:0007669"/>
    <property type="project" value="Ensembl"/>
</dbReference>
<dbReference type="GO" id="GO:0050965">
    <property type="term" value="P:detection of temperature stimulus involved in sensory perception of pain"/>
    <property type="evidence" value="ECO:0007669"/>
    <property type="project" value="Ensembl"/>
</dbReference>
<dbReference type="GO" id="GO:0060079">
    <property type="term" value="P:excitatory postsynaptic potential"/>
    <property type="evidence" value="ECO:0000314"/>
    <property type="project" value="MGI"/>
</dbReference>
<dbReference type="GO" id="GO:0055089">
    <property type="term" value="P:fatty acid homeostasis"/>
    <property type="evidence" value="ECO:0007669"/>
    <property type="project" value="Ensembl"/>
</dbReference>
<dbReference type="GO" id="GO:0035589">
    <property type="term" value="P:G protein-coupled purinergic nucleotide receptor signaling pathway"/>
    <property type="evidence" value="ECO:0007669"/>
    <property type="project" value="Ensembl"/>
</dbReference>
<dbReference type="GO" id="GO:0140928">
    <property type="term" value="P:inhibition of non-skeletal tissue mineralization"/>
    <property type="evidence" value="ECO:0000266"/>
    <property type="project" value="MGI"/>
</dbReference>
<dbReference type="GO" id="GO:0050900">
    <property type="term" value="P:leukocyte migration"/>
    <property type="evidence" value="ECO:0000316"/>
    <property type="project" value="MGI"/>
</dbReference>
<dbReference type="GO" id="GO:0016042">
    <property type="term" value="P:lipid catabolic process"/>
    <property type="evidence" value="ECO:0007669"/>
    <property type="project" value="Ensembl"/>
</dbReference>
<dbReference type="GO" id="GO:0060292">
    <property type="term" value="P:long-term synaptic depression"/>
    <property type="evidence" value="ECO:0000315"/>
    <property type="project" value="MGI"/>
</dbReference>
<dbReference type="GO" id="GO:0070254">
    <property type="term" value="P:mucus secretion"/>
    <property type="evidence" value="ECO:0000316"/>
    <property type="project" value="MGI"/>
</dbReference>
<dbReference type="GO" id="GO:0002674">
    <property type="term" value="P:negative regulation of acute inflammatory response"/>
    <property type="evidence" value="ECO:0007669"/>
    <property type="project" value="Ensembl"/>
</dbReference>
<dbReference type="GO" id="GO:0043066">
    <property type="term" value="P:negative regulation of apoptotic process"/>
    <property type="evidence" value="ECO:0007669"/>
    <property type="project" value="Ensembl"/>
</dbReference>
<dbReference type="GO" id="GO:0008285">
    <property type="term" value="P:negative regulation of cell population proliferation"/>
    <property type="evidence" value="ECO:0007669"/>
    <property type="project" value="Ensembl"/>
</dbReference>
<dbReference type="GO" id="GO:0042323">
    <property type="term" value="P:negative regulation of circadian sleep/wake cycle, non-REM sleep"/>
    <property type="evidence" value="ECO:0007669"/>
    <property type="project" value="Ensembl"/>
</dbReference>
<dbReference type="GO" id="GO:0014050">
    <property type="term" value="P:negative regulation of glutamate secretion"/>
    <property type="evidence" value="ECO:0007669"/>
    <property type="project" value="Ensembl"/>
</dbReference>
<dbReference type="GO" id="GO:0046888">
    <property type="term" value="P:negative regulation of hormone secretion"/>
    <property type="evidence" value="ECO:0007669"/>
    <property type="project" value="Ensembl"/>
</dbReference>
<dbReference type="GO" id="GO:0050728">
    <property type="term" value="P:negative regulation of inflammatory response"/>
    <property type="evidence" value="ECO:0000316"/>
    <property type="project" value="MGI"/>
</dbReference>
<dbReference type="GO" id="GO:0002686">
    <property type="term" value="P:negative regulation of leukocyte migration"/>
    <property type="evidence" value="ECO:0000316"/>
    <property type="project" value="MGI"/>
</dbReference>
<dbReference type="GO" id="GO:0050995">
    <property type="term" value="P:negative regulation of lipid catabolic process"/>
    <property type="evidence" value="ECO:0007669"/>
    <property type="project" value="Ensembl"/>
</dbReference>
<dbReference type="GO" id="GO:1900453">
    <property type="term" value="P:negative regulation of long-term synaptic depression"/>
    <property type="evidence" value="ECO:0000315"/>
    <property type="project" value="MGI"/>
</dbReference>
<dbReference type="GO" id="GO:1900272">
    <property type="term" value="P:negative regulation of long-term synaptic potentiation"/>
    <property type="evidence" value="ECO:0007669"/>
    <property type="project" value="Ensembl"/>
</dbReference>
<dbReference type="GO" id="GO:0070256">
    <property type="term" value="P:negative regulation of mucus secretion"/>
    <property type="evidence" value="ECO:0000316"/>
    <property type="project" value="MGI"/>
</dbReference>
<dbReference type="GO" id="GO:0032900">
    <property type="term" value="P:negative regulation of neurotrophin production"/>
    <property type="evidence" value="ECO:0007669"/>
    <property type="project" value="Ensembl"/>
</dbReference>
<dbReference type="GO" id="GO:0032229">
    <property type="term" value="P:negative regulation of synaptic transmission, GABAergic"/>
    <property type="evidence" value="ECO:0007669"/>
    <property type="project" value="Ensembl"/>
</dbReference>
<dbReference type="GO" id="GO:0051967">
    <property type="term" value="P:negative regulation of synaptic transmission, glutamatergic"/>
    <property type="evidence" value="ECO:0007669"/>
    <property type="project" value="Ensembl"/>
</dbReference>
<dbReference type="GO" id="GO:0003085">
    <property type="term" value="P:negative regulation of systemic arterial blood pressure"/>
    <property type="evidence" value="ECO:0007669"/>
    <property type="project" value="Ensembl"/>
</dbReference>
<dbReference type="GO" id="GO:0035306">
    <property type="term" value="P:positive regulation of dephosphorylation"/>
    <property type="evidence" value="ECO:0007669"/>
    <property type="project" value="Ensembl"/>
</dbReference>
<dbReference type="GO" id="GO:0050996">
    <property type="term" value="P:positive regulation of lipid catabolic process"/>
    <property type="evidence" value="ECO:0007669"/>
    <property type="project" value="Ensembl"/>
</dbReference>
<dbReference type="GO" id="GO:0043410">
    <property type="term" value="P:positive regulation of MAPK cascade"/>
    <property type="evidence" value="ECO:0007669"/>
    <property type="project" value="Ensembl"/>
</dbReference>
<dbReference type="GO" id="GO:0032244">
    <property type="term" value="P:positive regulation of nucleoside transport"/>
    <property type="evidence" value="ECO:0007669"/>
    <property type="project" value="Ensembl"/>
</dbReference>
<dbReference type="GO" id="GO:0002793">
    <property type="term" value="P:positive regulation of peptide secretion"/>
    <property type="evidence" value="ECO:0007669"/>
    <property type="project" value="Ensembl"/>
</dbReference>
<dbReference type="GO" id="GO:0043268">
    <property type="term" value="P:positive regulation of potassium ion transport"/>
    <property type="evidence" value="ECO:0007669"/>
    <property type="project" value="Ensembl"/>
</dbReference>
<dbReference type="GO" id="GO:0003084">
    <property type="term" value="P:positive regulation of systemic arterial blood pressure"/>
    <property type="evidence" value="ECO:0007669"/>
    <property type="project" value="Ensembl"/>
</dbReference>
<dbReference type="GO" id="GO:0006612">
    <property type="term" value="P:protein targeting to membrane"/>
    <property type="evidence" value="ECO:0007669"/>
    <property type="project" value="Ensembl"/>
</dbReference>
<dbReference type="GO" id="GO:0086004">
    <property type="term" value="P:regulation of cardiac muscle cell contraction"/>
    <property type="evidence" value="ECO:0007669"/>
    <property type="project" value="Ensembl"/>
</dbReference>
<dbReference type="GO" id="GO:0003093">
    <property type="term" value="P:regulation of glomerular filtration"/>
    <property type="evidence" value="ECO:0000315"/>
    <property type="project" value="MGI"/>
</dbReference>
<dbReference type="GO" id="GO:0099509">
    <property type="term" value="P:regulation of presynaptic cytosolic calcium ion concentration"/>
    <property type="evidence" value="ECO:0007669"/>
    <property type="project" value="Ensembl"/>
</dbReference>
<dbReference type="GO" id="GO:0002087">
    <property type="term" value="P:regulation of respiratory gaseous exchange by nervous system process"/>
    <property type="evidence" value="ECO:0007669"/>
    <property type="project" value="Ensembl"/>
</dbReference>
<dbReference type="GO" id="GO:0051930">
    <property type="term" value="P:regulation of sensory perception of pain"/>
    <property type="evidence" value="ECO:0000315"/>
    <property type="project" value="UniProtKB"/>
</dbReference>
<dbReference type="GO" id="GO:0001666">
    <property type="term" value="P:response to hypoxia"/>
    <property type="evidence" value="ECO:0007669"/>
    <property type="project" value="Ensembl"/>
</dbReference>
<dbReference type="GO" id="GO:0014074">
    <property type="term" value="P:response to purine-containing compound"/>
    <property type="evidence" value="ECO:0007669"/>
    <property type="project" value="Ensembl"/>
</dbReference>
<dbReference type="GO" id="GO:0001659">
    <property type="term" value="P:temperature homeostasis"/>
    <property type="evidence" value="ECO:0007669"/>
    <property type="project" value="Ensembl"/>
</dbReference>
<dbReference type="GO" id="GO:0070328">
    <property type="term" value="P:triglyceride homeostasis"/>
    <property type="evidence" value="ECO:0007669"/>
    <property type="project" value="Ensembl"/>
</dbReference>
<dbReference type="GO" id="GO:0042311">
    <property type="term" value="P:vasodilation"/>
    <property type="evidence" value="ECO:0007669"/>
    <property type="project" value="Ensembl"/>
</dbReference>
<dbReference type="CDD" id="cd15071">
    <property type="entry name" value="7tmA_Adenosine_R_A1"/>
    <property type="match status" value="1"/>
</dbReference>
<dbReference type="FunFam" id="1.20.1070.10:FF:000061">
    <property type="entry name" value="Adenosine receptor A2"/>
    <property type="match status" value="1"/>
</dbReference>
<dbReference type="Gene3D" id="1.20.1070.10">
    <property type="entry name" value="Rhodopsin 7-helix transmembrane proteins"/>
    <property type="match status" value="1"/>
</dbReference>
<dbReference type="InterPro" id="IPR001068">
    <property type="entry name" value="Adeno_A1_rcpt"/>
</dbReference>
<dbReference type="InterPro" id="IPR001634">
    <property type="entry name" value="Adenosn_rcpt"/>
</dbReference>
<dbReference type="InterPro" id="IPR000276">
    <property type="entry name" value="GPCR_Rhodpsn"/>
</dbReference>
<dbReference type="InterPro" id="IPR017452">
    <property type="entry name" value="GPCR_Rhodpsn_7TM"/>
</dbReference>
<dbReference type="PANTHER" id="PTHR24246:SF1">
    <property type="entry name" value="ADENOSINE RECEPTOR A1"/>
    <property type="match status" value="1"/>
</dbReference>
<dbReference type="PANTHER" id="PTHR24246">
    <property type="entry name" value="OLFACTORY RECEPTOR AND ADENOSINE RECEPTOR"/>
    <property type="match status" value="1"/>
</dbReference>
<dbReference type="Pfam" id="PF00001">
    <property type="entry name" value="7tm_1"/>
    <property type="match status" value="1"/>
</dbReference>
<dbReference type="PRINTS" id="PR00552">
    <property type="entry name" value="ADENOSINEA1R"/>
</dbReference>
<dbReference type="PRINTS" id="PR00424">
    <property type="entry name" value="ADENOSINER"/>
</dbReference>
<dbReference type="PRINTS" id="PR00237">
    <property type="entry name" value="GPCRRHODOPSN"/>
</dbReference>
<dbReference type="SMART" id="SM01381">
    <property type="entry name" value="7TM_GPCR_Srsx"/>
    <property type="match status" value="1"/>
</dbReference>
<dbReference type="SUPFAM" id="SSF81321">
    <property type="entry name" value="Family A G protein-coupled receptor-like"/>
    <property type="match status" value="1"/>
</dbReference>
<dbReference type="PROSITE" id="PS00237">
    <property type="entry name" value="G_PROTEIN_RECEP_F1_1"/>
    <property type="match status" value="1"/>
</dbReference>
<dbReference type="PROSITE" id="PS50262">
    <property type="entry name" value="G_PROTEIN_RECEP_F1_2"/>
    <property type="match status" value="1"/>
</dbReference>
<name>AA1R_MOUSE</name>
<organism>
    <name type="scientific">Mus musculus</name>
    <name type="common">Mouse</name>
    <dbReference type="NCBI Taxonomy" id="10090"/>
    <lineage>
        <taxon>Eukaryota</taxon>
        <taxon>Metazoa</taxon>
        <taxon>Chordata</taxon>
        <taxon>Craniata</taxon>
        <taxon>Vertebrata</taxon>
        <taxon>Euteleostomi</taxon>
        <taxon>Mammalia</taxon>
        <taxon>Eutheria</taxon>
        <taxon>Euarchontoglires</taxon>
        <taxon>Glires</taxon>
        <taxon>Rodentia</taxon>
        <taxon>Myomorpha</taxon>
        <taxon>Muroidea</taxon>
        <taxon>Muridae</taxon>
        <taxon>Murinae</taxon>
        <taxon>Mus</taxon>
        <taxon>Mus</taxon>
    </lineage>
</organism>
<comment type="function">
    <text>Receptor for adenosine. The activity of this receptor is mediated by G proteins which inhibit adenylyl cyclase.</text>
</comment>
<comment type="subcellular location">
    <subcellularLocation>
        <location>Cell membrane</location>
        <topology>Multi-pass membrane protein</topology>
    </subcellularLocation>
</comment>
<comment type="similarity">
    <text evidence="2">Belongs to the G-protein coupled receptor 1 family.</text>
</comment>
<comment type="sequence caution" evidence="3">
    <conflict type="erroneous initiation">
        <sequence resource="EMBL-CDS" id="AAA18999"/>
    </conflict>
</comment>
<evidence type="ECO:0000255" key="1"/>
<evidence type="ECO:0000255" key="2">
    <source>
        <dbReference type="PROSITE-ProRule" id="PRU00521"/>
    </source>
</evidence>
<evidence type="ECO:0000305" key="3"/>
<sequence>MPPYISAFQAAYIGIEVLIALVSVPGNVLVIWAVKVNQALRDATFCFIVSLAVADVAVGALVIPLAILINIGPQTYFHTCLMVACPVLILTQSSILALLAIAVDRYLRVKIPLRYKTVVTQRRAAVAIAGCWILSLVVGLTPMFGWNNLSEVEQAWIANGSVGEPVIKCEFEKVISMEYMVYFNFFVWVLPPLLLMVLIYLEVFYLIRKQLNKKVSASSGDPQKYYGKELKIAKSLALILFLFALSWLPLHILNCITLFCPTCQKPSILIYIAIFLTHGNSAMNPIVYAFRIHKFRVTFLKIWNDHFRCQPKPPIEEDIPEEKADD</sequence>